<proteinExistence type="evidence at transcript level"/>
<protein>
    <recommendedName>
        <fullName>Folylpolyglutamate synthase, mitochondrial</fullName>
        <ecNumber>6.3.2.17</ecNumber>
    </recommendedName>
    <alternativeName>
        <fullName>Folylpoly-gamma-glutamate synthetase</fullName>
        <shortName>FPGS</shortName>
    </alternativeName>
    <alternativeName>
        <fullName>Tetrahydrofolate synthase</fullName>
    </alternativeName>
    <alternativeName>
        <fullName>Tetrahydrofolylpolyglutamate synthase</fullName>
    </alternativeName>
</protein>
<reference key="1">
    <citation type="submission" date="2007-06" db="EMBL/GenBank/DDBJ databases">
        <authorList>
            <consortium name="NIH - Mammalian Gene Collection (MGC) project"/>
        </authorList>
    </citation>
    <scope>NUCLEOTIDE SEQUENCE [LARGE SCALE MRNA]</scope>
    <source>
        <strain>Crossbred X Angus</strain>
        <tissue>Liver</tissue>
    </source>
</reference>
<gene>
    <name type="primary">FPGS</name>
</gene>
<keyword id="KW-0067">ATP-binding</keyword>
<keyword id="KW-0963">Cytoplasm</keyword>
<keyword id="KW-0436">Ligase</keyword>
<keyword id="KW-0460">Magnesium</keyword>
<keyword id="KW-0472">Membrane</keyword>
<keyword id="KW-0479">Metal-binding</keyword>
<keyword id="KW-0496">Mitochondrion</keyword>
<keyword id="KW-0999">Mitochondrion inner membrane</keyword>
<keyword id="KW-0547">Nucleotide-binding</keyword>
<keyword id="KW-0554">One-carbon metabolism</keyword>
<keyword id="KW-0597">Phosphoprotein</keyword>
<keyword id="KW-1185">Reference proteome</keyword>
<keyword id="KW-0809">Transit peptide</keyword>
<feature type="transit peptide" description="Mitochondrion" evidence="1">
    <location>
        <begin position="1"/>
        <end position="39"/>
    </location>
</feature>
<feature type="chain" id="PRO_0000339186" description="Folylpolyglutamate synthase, mitochondrial">
    <location>
        <begin position="40"/>
        <end position="585"/>
    </location>
</feature>
<feature type="region of interest" description="Disordered" evidence="4">
    <location>
        <begin position="477"/>
        <end position="497"/>
    </location>
</feature>
<feature type="binding site" evidence="2">
    <location>
        <begin position="103"/>
        <end position="106"/>
    </location>
    <ligand>
        <name>ATP</name>
        <dbReference type="ChEBI" id="CHEBI:30616"/>
    </ligand>
</feature>
<feature type="binding site" evidence="2">
    <location>
        <position position="127"/>
    </location>
    <ligand>
        <name>Mg(2+)</name>
        <dbReference type="ChEBI" id="CHEBI:18420"/>
        <label>1</label>
    </ligand>
</feature>
<feature type="binding site" evidence="2">
    <location>
        <position position="198"/>
    </location>
    <ligand>
        <name>Mg(2+)</name>
        <dbReference type="ChEBI" id="CHEBI:18420"/>
        <label>1</label>
    </ligand>
</feature>
<feature type="binding site" evidence="2">
    <location>
        <position position="226"/>
    </location>
    <ligand>
        <name>Mg(2+)</name>
        <dbReference type="ChEBI" id="CHEBI:18420"/>
        <label>2</label>
    </ligand>
</feature>
<feature type="binding site" evidence="2">
    <location>
        <position position="361"/>
    </location>
    <ligand>
        <name>ATP</name>
        <dbReference type="ChEBI" id="CHEBI:30616"/>
    </ligand>
</feature>
<feature type="binding site" evidence="2">
    <location>
        <position position="375"/>
    </location>
    <ligand>
        <name>ATP</name>
        <dbReference type="ChEBI" id="CHEBI:30616"/>
    </ligand>
</feature>
<feature type="modified residue" description="Phosphoserine" evidence="3">
    <location>
        <position position="537"/>
    </location>
</feature>
<evidence type="ECO:0000250" key="1"/>
<evidence type="ECO:0000250" key="2">
    <source>
        <dbReference type="UniProtKB" id="P08192"/>
    </source>
</evidence>
<evidence type="ECO:0000250" key="3">
    <source>
        <dbReference type="UniProtKB" id="Q05932"/>
    </source>
</evidence>
<evidence type="ECO:0000256" key="4">
    <source>
        <dbReference type="SAM" id="MobiDB-lite"/>
    </source>
</evidence>
<evidence type="ECO:0000305" key="5"/>
<name>FOLC_BOVIN</name>
<organism>
    <name type="scientific">Bos taurus</name>
    <name type="common">Bovine</name>
    <dbReference type="NCBI Taxonomy" id="9913"/>
    <lineage>
        <taxon>Eukaryota</taxon>
        <taxon>Metazoa</taxon>
        <taxon>Chordata</taxon>
        <taxon>Craniata</taxon>
        <taxon>Vertebrata</taxon>
        <taxon>Euteleostomi</taxon>
        <taxon>Mammalia</taxon>
        <taxon>Eutheria</taxon>
        <taxon>Laurasiatheria</taxon>
        <taxon>Artiodactyla</taxon>
        <taxon>Ruminantia</taxon>
        <taxon>Pecora</taxon>
        <taxon>Bovidae</taxon>
        <taxon>Bovinae</taxon>
        <taxon>Bos</taxon>
    </lineage>
</organism>
<comment type="function">
    <text evidence="1">Catalyzes conversion of folates to polyglutamate derivatives allowing concentration of folate compounds in the cell and the intracellular retention of these cofactors, which are important substrates for most of the folate-dependent enzymes that are involved in one-carbon transfer reactions involved in purine, pyrimidine and amino acid synthesis.</text>
</comment>
<comment type="catalytic activity">
    <reaction>
        <text>(6S)-5,6,7,8-tetrahydrofolyl-(gamma-L-Glu)(n) + L-glutamate + ATP = (6S)-5,6,7,8-tetrahydrofolyl-(gamma-L-Glu)(n+1) + ADP + phosphate + H(+)</text>
        <dbReference type="Rhea" id="RHEA:10580"/>
        <dbReference type="Rhea" id="RHEA-COMP:14738"/>
        <dbReference type="Rhea" id="RHEA-COMP:14740"/>
        <dbReference type="ChEBI" id="CHEBI:15378"/>
        <dbReference type="ChEBI" id="CHEBI:29985"/>
        <dbReference type="ChEBI" id="CHEBI:30616"/>
        <dbReference type="ChEBI" id="CHEBI:43474"/>
        <dbReference type="ChEBI" id="CHEBI:141005"/>
        <dbReference type="ChEBI" id="CHEBI:456216"/>
        <dbReference type="EC" id="6.3.2.17"/>
    </reaction>
</comment>
<comment type="cofactor">
    <cofactor evidence="1">
        <name>a monovalent cation</name>
        <dbReference type="ChEBI" id="CHEBI:60242"/>
    </cofactor>
    <text evidence="1">A monovalent cation.</text>
</comment>
<comment type="pathway">
    <text>Cofactor biosynthesis; tetrahydrofolylpolyglutamate biosynthesis.</text>
</comment>
<comment type="subunit">
    <text evidence="1">Monomer.</text>
</comment>
<comment type="subcellular location">
    <subcellularLocation>
        <location evidence="3">Mitochondrion inner membrane</location>
    </subcellularLocation>
    <subcellularLocation>
        <location evidence="3">Mitochondrion matrix</location>
    </subcellularLocation>
    <subcellularLocation>
        <location evidence="3">Cytoplasm</location>
    </subcellularLocation>
</comment>
<comment type="similarity">
    <text evidence="5">Belongs to the folylpolyglutamate synthase family.</text>
</comment>
<dbReference type="EC" id="6.3.2.17"/>
<dbReference type="EMBL" id="BC146114">
    <property type="protein sequence ID" value="AAI46115.1"/>
    <property type="molecule type" value="mRNA"/>
</dbReference>
<dbReference type="RefSeq" id="NP_001019651.2">
    <property type="nucleotide sequence ID" value="NM_001024480.2"/>
</dbReference>
<dbReference type="SMR" id="A6H751"/>
<dbReference type="FunCoup" id="A6H751">
    <property type="interactions" value="1450"/>
</dbReference>
<dbReference type="STRING" id="9913.ENSBTAP00000011844"/>
<dbReference type="PaxDb" id="9913-ENSBTAP00000032691"/>
<dbReference type="GeneID" id="505809"/>
<dbReference type="KEGG" id="bta:505809"/>
<dbReference type="CTD" id="2356"/>
<dbReference type="eggNOG" id="KOG2525">
    <property type="taxonomic scope" value="Eukaryota"/>
</dbReference>
<dbReference type="InParanoid" id="A6H751"/>
<dbReference type="OrthoDB" id="5212574at2759"/>
<dbReference type="UniPathway" id="UPA00850"/>
<dbReference type="Proteomes" id="UP000009136">
    <property type="component" value="Unplaced"/>
</dbReference>
<dbReference type="GO" id="GO:0005737">
    <property type="term" value="C:cytoplasm"/>
    <property type="evidence" value="ECO:0000318"/>
    <property type="project" value="GO_Central"/>
</dbReference>
<dbReference type="GO" id="GO:0005829">
    <property type="term" value="C:cytosol"/>
    <property type="evidence" value="ECO:0000318"/>
    <property type="project" value="GO_Central"/>
</dbReference>
<dbReference type="GO" id="GO:0005743">
    <property type="term" value="C:mitochondrial inner membrane"/>
    <property type="evidence" value="ECO:0007669"/>
    <property type="project" value="UniProtKB-SubCell"/>
</dbReference>
<dbReference type="GO" id="GO:0005759">
    <property type="term" value="C:mitochondrial matrix"/>
    <property type="evidence" value="ECO:0007669"/>
    <property type="project" value="UniProtKB-SubCell"/>
</dbReference>
<dbReference type="GO" id="GO:0005739">
    <property type="term" value="C:mitochondrion"/>
    <property type="evidence" value="ECO:0000318"/>
    <property type="project" value="GO_Central"/>
</dbReference>
<dbReference type="GO" id="GO:0005524">
    <property type="term" value="F:ATP binding"/>
    <property type="evidence" value="ECO:0007669"/>
    <property type="project" value="UniProtKB-KW"/>
</dbReference>
<dbReference type="GO" id="GO:0046872">
    <property type="term" value="F:metal ion binding"/>
    <property type="evidence" value="ECO:0007669"/>
    <property type="project" value="UniProtKB-KW"/>
</dbReference>
<dbReference type="GO" id="GO:0004326">
    <property type="term" value="F:tetrahydrofolylpolyglutamate synthase activity"/>
    <property type="evidence" value="ECO:0000318"/>
    <property type="project" value="GO_Central"/>
</dbReference>
<dbReference type="GO" id="GO:0006730">
    <property type="term" value="P:one-carbon metabolic process"/>
    <property type="evidence" value="ECO:0007669"/>
    <property type="project" value="UniProtKB-KW"/>
</dbReference>
<dbReference type="GO" id="GO:0046901">
    <property type="term" value="P:tetrahydrofolylpolyglutamate biosynthetic process"/>
    <property type="evidence" value="ECO:0000318"/>
    <property type="project" value="GO_Central"/>
</dbReference>
<dbReference type="FunFam" id="3.40.1190.10:FF:000005">
    <property type="entry name" value="Folylpolyglutamate synthase"/>
    <property type="match status" value="1"/>
</dbReference>
<dbReference type="FunFam" id="3.90.190.20:FF:000007">
    <property type="entry name" value="Folylpolyglutamate synthase"/>
    <property type="match status" value="1"/>
</dbReference>
<dbReference type="Gene3D" id="3.90.190.20">
    <property type="entry name" value="Mur ligase, C-terminal domain"/>
    <property type="match status" value="1"/>
</dbReference>
<dbReference type="Gene3D" id="3.40.1190.10">
    <property type="entry name" value="Mur-like, catalytic domain"/>
    <property type="match status" value="1"/>
</dbReference>
<dbReference type="InterPro" id="IPR001645">
    <property type="entry name" value="Folylpolyglutamate_synth"/>
</dbReference>
<dbReference type="InterPro" id="IPR018109">
    <property type="entry name" value="Folylpolyglutamate_synth_CS"/>
</dbReference>
<dbReference type="InterPro" id="IPR023600">
    <property type="entry name" value="Folylpolyglutamate_synth_euk"/>
</dbReference>
<dbReference type="InterPro" id="IPR036565">
    <property type="entry name" value="Mur-like_cat_sf"/>
</dbReference>
<dbReference type="InterPro" id="IPR036615">
    <property type="entry name" value="Mur_ligase_C_dom_sf"/>
</dbReference>
<dbReference type="InterPro" id="IPR013221">
    <property type="entry name" value="Mur_ligase_cen"/>
</dbReference>
<dbReference type="NCBIfam" id="TIGR01499">
    <property type="entry name" value="folC"/>
    <property type="match status" value="1"/>
</dbReference>
<dbReference type="PANTHER" id="PTHR11136:SF5">
    <property type="entry name" value="FOLYLPOLYGLUTAMATE SYNTHASE, MITOCHONDRIAL"/>
    <property type="match status" value="1"/>
</dbReference>
<dbReference type="PANTHER" id="PTHR11136">
    <property type="entry name" value="FOLYLPOLYGLUTAMATE SYNTHASE-RELATED"/>
    <property type="match status" value="1"/>
</dbReference>
<dbReference type="Pfam" id="PF08245">
    <property type="entry name" value="Mur_ligase_M"/>
    <property type="match status" value="1"/>
</dbReference>
<dbReference type="PIRSF" id="PIRSF038895">
    <property type="entry name" value="FPGS"/>
    <property type="match status" value="1"/>
</dbReference>
<dbReference type="SUPFAM" id="SSF53623">
    <property type="entry name" value="MurD-like peptide ligases, catalytic domain"/>
    <property type="match status" value="1"/>
</dbReference>
<dbReference type="SUPFAM" id="SSF53244">
    <property type="entry name" value="MurD-like peptide ligases, peptide-binding domain"/>
    <property type="match status" value="1"/>
</dbReference>
<dbReference type="PROSITE" id="PS01011">
    <property type="entry name" value="FOLYLPOLYGLU_SYNT_1"/>
    <property type="match status" value="1"/>
</dbReference>
<dbReference type="PROSITE" id="PS01012">
    <property type="entry name" value="FOLYLPOLYGLU_SYNT_2"/>
    <property type="match status" value="1"/>
</dbReference>
<sequence length="585" mass="64900">MSRARCHALFLAAVSPRGATTRVAVRRGLSAWPVLQEPDMEYQDAVRTLNTLQTNANYLEMVKRKRGDPQTQLEAMKLYLARSGLQVEDLDQLNIIHITGTKGKGSTCAFTERILRSYGLKTGFFSSPHLVQVRERIRINGQPISSELFTKHFWRLYHRLEETKDDSSCVSMPGYFRFLTLMAFHVFLQEKVDLAVLEVGIGGAYDCTNIIRKPVVCGITSLGIDHTGLLGDTMEKIAWQKGGIFKSGVPAFTVLQPDEPLAVLRDRAQQISCPLYLCPPLQALEEGGPPLTLGLEGEHQRSNAALALQVARCWLQQKGYQDAGELKASRPSLPGQLPLAPVFQPTPRMQQGLRHTEWPGRTQLLRRGPLTWYLDGAHTTSSMQACVRWFRQALHRCERPDSGSEVRVLLFNSTGDRDSAALLKLLQPCQFDYAIFCPNLAEMASTDNADQQNFTVTLDQVLLRCLAHQQHWSRLHEEQVSPDPWSTPGQEQDGPASLLLAPHPPHTHSASSLVFSCISHALQWITQGRDPLFQPPSPPRGLLAHPVADSGATVLQEAADIHVLVTGSLHLVGGVLKLLEPSLSQ</sequence>
<accession>A6H751</accession>